<keyword id="KW-0028">Amino-acid biosynthesis</keyword>
<keyword id="KW-0100">Branched-chain amino acid biosynthesis</keyword>
<keyword id="KW-0432">Leucine biosynthesis</keyword>
<keyword id="KW-0479">Metal-binding</keyword>
<keyword id="KW-0496">Mitochondrion</keyword>
<keyword id="KW-1185">Reference proteome</keyword>
<keyword id="KW-0808">Transferase</keyword>
<keyword id="KW-0809">Transit peptide</keyword>
<protein>
    <recommendedName>
        <fullName>2-isopropylmalate synthase 2, mitochondrial</fullName>
        <ecNumber>2.3.3.13</ecNumber>
    </recommendedName>
    <alternativeName>
        <fullName>Alpha-IPM synthase 2</fullName>
    </alternativeName>
    <alternativeName>
        <fullName>Alpha-isopropylmalate synthase 2</fullName>
    </alternativeName>
    <alternativeName>
        <fullName>Alpha-isopropylmalate synthase II</fullName>
    </alternativeName>
</protein>
<reference key="1">
    <citation type="journal article" date="1997" name="Yeast">
        <title>DNA sequencing and analysis of 130 kb from yeast chromosome XV.</title>
        <authorList>
            <person name="Voss H."/>
            <person name="Benes V."/>
            <person name="Andrade M.A."/>
            <person name="Valencia A."/>
            <person name="Rechmann S."/>
            <person name="Teodoru C."/>
            <person name="Schwager C."/>
            <person name="Paces V."/>
            <person name="Sander C."/>
            <person name="Ansorge W."/>
        </authorList>
    </citation>
    <scope>NUCLEOTIDE SEQUENCE [GENOMIC DNA]</scope>
</reference>
<reference key="2">
    <citation type="journal article" date="1997" name="Nature">
        <title>The nucleotide sequence of Saccharomyces cerevisiae chromosome XV.</title>
        <authorList>
            <person name="Dujon B."/>
            <person name="Albermann K."/>
            <person name="Aldea M."/>
            <person name="Alexandraki D."/>
            <person name="Ansorge W."/>
            <person name="Arino J."/>
            <person name="Benes V."/>
            <person name="Bohn C."/>
            <person name="Bolotin-Fukuhara M."/>
            <person name="Bordonne R."/>
            <person name="Boyer J."/>
            <person name="Camasses A."/>
            <person name="Casamayor A."/>
            <person name="Casas C."/>
            <person name="Cheret G."/>
            <person name="Cziepluch C."/>
            <person name="Daignan-Fornier B."/>
            <person name="Dang V.-D."/>
            <person name="de Haan M."/>
            <person name="Delius H."/>
            <person name="Durand P."/>
            <person name="Fairhead C."/>
            <person name="Feldmann H."/>
            <person name="Gaillon L."/>
            <person name="Galisson F."/>
            <person name="Gamo F.-J."/>
            <person name="Gancedo C."/>
            <person name="Goffeau A."/>
            <person name="Goulding S.E."/>
            <person name="Grivell L.A."/>
            <person name="Habbig B."/>
            <person name="Hand N.J."/>
            <person name="Hani J."/>
            <person name="Hattenhorst U."/>
            <person name="Hebling U."/>
            <person name="Hernando Y."/>
            <person name="Herrero E."/>
            <person name="Heumann K."/>
            <person name="Hiesel R."/>
            <person name="Hilger F."/>
            <person name="Hofmann B."/>
            <person name="Hollenberg C.P."/>
            <person name="Hughes B."/>
            <person name="Jauniaux J.-C."/>
            <person name="Kalogeropoulos A."/>
            <person name="Katsoulou C."/>
            <person name="Kordes E."/>
            <person name="Lafuente M.J."/>
            <person name="Landt O."/>
            <person name="Louis E.J."/>
            <person name="Maarse A.C."/>
            <person name="Madania A."/>
            <person name="Mannhaupt G."/>
            <person name="Marck C."/>
            <person name="Martin R.P."/>
            <person name="Mewes H.-W."/>
            <person name="Michaux G."/>
            <person name="Paces V."/>
            <person name="Parle-McDermott A.G."/>
            <person name="Pearson B.M."/>
            <person name="Perrin A."/>
            <person name="Pettersson B."/>
            <person name="Poch O."/>
            <person name="Pohl T.M."/>
            <person name="Poirey R."/>
            <person name="Portetelle D."/>
            <person name="Pujol A."/>
            <person name="Purnelle B."/>
            <person name="Ramezani Rad M."/>
            <person name="Rechmann S."/>
            <person name="Schwager C."/>
            <person name="Schweizer M."/>
            <person name="Sor F."/>
            <person name="Sterky F."/>
            <person name="Tarassov I.A."/>
            <person name="Teodoru C."/>
            <person name="Tettelin H."/>
            <person name="Thierry A."/>
            <person name="Tobiasch E."/>
            <person name="Tzermia M."/>
            <person name="Uhlen M."/>
            <person name="Unseld M."/>
            <person name="Valens M."/>
            <person name="Vandenbol M."/>
            <person name="Vetter I."/>
            <person name="Vlcek C."/>
            <person name="Voet M."/>
            <person name="Volckaert G."/>
            <person name="Voss H."/>
            <person name="Wambutt R."/>
            <person name="Wedler H."/>
            <person name="Wiemann S."/>
            <person name="Winsor B."/>
            <person name="Wolfe K.H."/>
            <person name="Zollner A."/>
            <person name="Zumstein E."/>
            <person name="Kleine K."/>
        </authorList>
    </citation>
    <scope>NUCLEOTIDE SEQUENCE [LARGE SCALE GENOMIC DNA]</scope>
    <source>
        <strain>ATCC 204508 / S288c</strain>
    </source>
</reference>
<reference key="3">
    <citation type="journal article" date="2014" name="G3 (Bethesda)">
        <title>The reference genome sequence of Saccharomyces cerevisiae: Then and now.</title>
        <authorList>
            <person name="Engel S.R."/>
            <person name="Dietrich F.S."/>
            <person name="Fisk D.G."/>
            <person name="Binkley G."/>
            <person name="Balakrishnan R."/>
            <person name="Costanzo M.C."/>
            <person name="Dwight S.S."/>
            <person name="Hitz B.C."/>
            <person name="Karra K."/>
            <person name="Nash R.S."/>
            <person name="Weng S."/>
            <person name="Wong E.D."/>
            <person name="Lloyd P."/>
            <person name="Skrzypek M.S."/>
            <person name="Miyasato S.R."/>
            <person name="Simison M."/>
            <person name="Cherry J.M."/>
        </authorList>
    </citation>
    <scope>GENOME REANNOTATION</scope>
    <source>
        <strain>ATCC 204508 / S288c</strain>
    </source>
</reference>
<reference key="4">
    <citation type="journal article" date="2000" name="Yeast">
        <title>Identification by functional analysis of the gene encoding alpha-isopropylmalate synthase II (LEU9) in Saccharomyces cerevisiae.</title>
        <authorList>
            <person name="Casalone E."/>
            <person name="Barberio C."/>
            <person name="Cavalieri D."/>
            <person name="Polsinelli M."/>
        </authorList>
    </citation>
    <scope>FUNCTION</scope>
    <scope>DISRUPTION PHENOTYPE</scope>
</reference>
<reference key="5">
    <citation type="journal article" date="2003" name="Nature">
        <title>Global analysis of protein localization in budding yeast.</title>
        <authorList>
            <person name="Huh W.-K."/>
            <person name="Falvo J.V."/>
            <person name="Gerke L.C."/>
            <person name="Carroll A.S."/>
            <person name="Howson R.W."/>
            <person name="Weissman J.S."/>
            <person name="O'Shea E.K."/>
        </authorList>
    </citation>
    <scope>SUBCELLULAR LOCATION [LARGE SCALE ANALYSIS]</scope>
</reference>
<reference key="6">
    <citation type="journal article" date="2003" name="Nature">
        <title>Global analysis of protein expression in yeast.</title>
        <authorList>
            <person name="Ghaemmaghami S."/>
            <person name="Huh W.-K."/>
            <person name="Bower K."/>
            <person name="Howson R.W."/>
            <person name="Belle A."/>
            <person name="Dephoure N."/>
            <person name="O'Shea E.K."/>
            <person name="Weissman J.S."/>
        </authorList>
    </citation>
    <scope>LEVEL OF PROTEIN EXPRESSION [LARGE SCALE ANALYSIS]</scope>
</reference>
<reference key="7">
    <citation type="journal article" date="2006" name="J. Proteome Res.">
        <title>Toward the complete yeast mitochondrial proteome: multidimensional separation techniques for mitochondrial proteomics.</title>
        <authorList>
            <person name="Reinders J."/>
            <person name="Zahedi R.P."/>
            <person name="Pfanner N."/>
            <person name="Meisinger C."/>
            <person name="Sickmann A."/>
        </authorList>
    </citation>
    <scope>SUBCELLULAR LOCATION [LARGE SCALE ANALYSIS]</scope>
    <scope>IDENTIFICATION BY MASS SPECTROMETRY</scope>
</reference>
<feature type="transit peptide" description="Mitochondrion" evidence="3">
    <location>
        <begin position="1"/>
        <end position="50"/>
    </location>
</feature>
<feature type="chain" id="PRO_0000255958" description="2-isopropylmalate synthase 2, mitochondrial">
    <location>
        <begin position="51"/>
        <end position="604"/>
    </location>
</feature>
<feature type="domain" description="Pyruvate carboxyltransferase" evidence="4">
    <location>
        <begin position="60"/>
        <end position="335"/>
    </location>
</feature>
<feature type="binding site" evidence="1">
    <location>
        <position position="69"/>
    </location>
    <ligand>
        <name>a divalent metal cation</name>
        <dbReference type="ChEBI" id="CHEBI:60240"/>
    </ligand>
</feature>
<feature type="binding site" evidence="1">
    <location>
        <position position="274"/>
    </location>
    <ligand>
        <name>a divalent metal cation</name>
        <dbReference type="ChEBI" id="CHEBI:60240"/>
    </ligand>
</feature>
<feature type="binding site" evidence="1">
    <location>
        <position position="276"/>
    </location>
    <ligand>
        <name>a divalent metal cation</name>
        <dbReference type="ChEBI" id="CHEBI:60240"/>
    </ligand>
</feature>
<feature type="binding site" evidence="1">
    <location>
        <position position="310"/>
    </location>
    <ligand>
        <name>a divalent metal cation</name>
        <dbReference type="ChEBI" id="CHEBI:60240"/>
    </ligand>
</feature>
<comment type="function">
    <text evidence="5">Catalyzes the condensation of the acetyl group of acetyl-CoA with 3-methyl-2-oxobutanoate (2-oxoisovalerate) to form 3-carboxy-3-hydroxy-4-methylpentanoate (2-isopropylmalate). Redundant to LEU4, responsible for about 20% of alpha-IPMS activity. Involved in leucine synthesis.</text>
</comment>
<comment type="catalytic activity">
    <reaction>
        <text>3-methyl-2-oxobutanoate + acetyl-CoA + H2O = (2S)-2-isopropylmalate + CoA + H(+)</text>
        <dbReference type="Rhea" id="RHEA:21524"/>
        <dbReference type="ChEBI" id="CHEBI:1178"/>
        <dbReference type="ChEBI" id="CHEBI:11851"/>
        <dbReference type="ChEBI" id="CHEBI:15377"/>
        <dbReference type="ChEBI" id="CHEBI:15378"/>
        <dbReference type="ChEBI" id="CHEBI:57287"/>
        <dbReference type="ChEBI" id="CHEBI:57288"/>
        <dbReference type="EC" id="2.3.3.13"/>
    </reaction>
</comment>
<comment type="cofactor">
    <cofactor evidence="1 2">
        <name>a divalent metal cation</name>
        <dbReference type="ChEBI" id="CHEBI:60240"/>
    </cofactor>
</comment>
<comment type="pathway">
    <text>Amino-acid biosynthesis; L-leucine biosynthesis; L-leucine from 3-methyl-2-oxobutanoate: step 1/4.</text>
</comment>
<comment type="subunit">
    <text evidence="1">Homodimer.</text>
</comment>
<comment type="interaction">
    <interactant intactId="EBI-37359">
        <id>Q12166</id>
    </interactant>
    <interactant intactId="EBI-10116">
        <id>P06208</id>
        <label>LEU4</label>
    </interactant>
    <organismsDiffer>false</organismsDiffer>
    <experiments>4</experiments>
</comment>
<comment type="subcellular location">
    <subcellularLocation>
        <location evidence="6 8">Mitochondrion</location>
    </subcellularLocation>
</comment>
<comment type="disruption phenotype">
    <text evidence="5">Retains 79% 2-isopropylmalate synthase activity and grows in the absence of Leu; a double LEU1-LEU9 deletion has no 2-isopropylmalate synthase, does not grow in the absence of Leu.</text>
</comment>
<comment type="miscellaneous">
    <text evidence="7">Present with 28800 molecules/cell in log phase SD medium.</text>
</comment>
<comment type="similarity">
    <text evidence="10">Belongs to the alpha-IPM synthase/homocitrate synthase family. LeuA type 2 subfamily.</text>
</comment>
<sequence length="604" mass="67200">MVKHSFIALAEHASKLRRSIPPVKLTYKNMLRDPSVKYRAFAPPKMVKRIWPDKTIQKAPRWLSTDLRDGNQSLPDPMSVAQKKEYFHKLINIGFKEIEVSFPSASQTDFDFTRYAVENAPDDVGIQCLVQSREHLIKRTVEALTGAKRATIHTYLATSDMFREIVFNMSREEAISKAVEATKLVRKLTKDDPSQQATRWSYEFSPECFSDTPGEFAVEICEAVKKAWEPTEENPIIFNLPATVEVASPNVYADQIEYFSTHITEREKVCISTHCHNDRGCGVAATELGMLAGADRVEGCLFGNGERTGNVDLVTVAMNMYTQGVSPNLDFSDLTSISEIVHRCNKIPIPPRAPYGGELVVSAFSGSHQDAIKKGFAIQNKKQAQGETRWRIPYLPLDPKDIGRDYEAVIRVNSQSGKGGAAWVIMRSLGLDVPRPMQVDFSNTLQKNADALGRELKSEEITKLFKETYNYNNNEHIYVTLLNYEVKKLNPERRALVGQVEINDKVVNIEGYGNGPISSLVDALSNLLNVKLSVQNYSEHSLGSGSATQAASFINLSYIKDINNHATSNMWGVGVSEDTGDASIKAVFATVNNIIHSGDVLLAE</sequence>
<organism>
    <name type="scientific">Saccharomyces cerevisiae (strain ATCC 204508 / S288c)</name>
    <name type="common">Baker's yeast</name>
    <dbReference type="NCBI Taxonomy" id="559292"/>
    <lineage>
        <taxon>Eukaryota</taxon>
        <taxon>Fungi</taxon>
        <taxon>Dikarya</taxon>
        <taxon>Ascomycota</taxon>
        <taxon>Saccharomycotina</taxon>
        <taxon>Saccharomycetes</taxon>
        <taxon>Saccharomycetales</taxon>
        <taxon>Saccharomycetaceae</taxon>
        <taxon>Saccharomyces</taxon>
    </lineage>
</organism>
<gene>
    <name evidence="9" type="primary">LEU9</name>
    <name type="ordered locus">YOR108W</name>
    <name type="ORF">YOR3227w</name>
</gene>
<accession>Q12166</accession>
<accession>D6W2G7</accession>
<name>LEU9_YEAST</name>
<proteinExistence type="evidence at protein level"/>
<dbReference type="EC" id="2.3.3.13"/>
<dbReference type="EMBL" id="X94335">
    <property type="protein sequence ID" value="CAA64028.1"/>
    <property type="molecule type" value="Genomic_DNA"/>
</dbReference>
<dbReference type="EMBL" id="Z75016">
    <property type="protein sequence ID" value="CAA99306.1"/>
    <property type="molecule type" value="Genomic_DNA"/>
</dbReference>
<dbReference type="EMBL" id="BK006948">
    <property type="protein sequence ID" value="DAA10883.1"/>
    <property type="molecule type" value="Genomic_DNA"/>
</dbReference>
<dbReference type="PIR" id="S66993">
    <property type="entry name" value="S66993"/>
</dbReference>
<dbReference type="RefSeq" id="NP_014751.1">
    <property type="nucleotide sequence ID" value="NM_001183527.1"/>
</dbReference>
<dbReference type="SMR" id="Q12166"/>
<dbReference type="BioGRID" id="34504">
    <property type="interactions" value="74"/>
</dbReference>
<dbReference type="DIP" id="DIP-4153N"/>
<dbReference type="FunCoup" id="Q12166">
    <property type="interactions" value="244"/>
</dbReference>
<dbReference type="IntAct" id="Q12166">
    <property type="interactions" value="6"/>
</dbReference>
<dbReference type="MINT" id="Q12166"/>
<dbReference type="STRING" id="4932.YOR108W"/>
<dbReference type="iPTMnet" id="Q12166"/>
<dbReference type="PaxDb" id="4932-YOR108W"/>
<dbReference type="PeptideAtlas" id="Q12166"/>
<dbReference type="EnsemblFungi" id="YOR108W_mRNA">
    <property type="protein sequence ID" value="YOR108W"/>
    <property type="gene ID" value="YOR108W"/>
</dbReference>
<dbReference type="GeneID" id="854275"/>
<dbReference type="KEGG" id="sce:YOR108W"/>
<dbReference type="AGR" id="SGD:S000005634"/>
<dbReference type="SGD" id="S000005634">
    <property type="gene designation" value="LEU9"/>
</dbReference>
<dbReference type="VEuPathDB" id="FungiDB:YOR108W"/>
<dbReference type="eggNOG" id="KOG2367">
    <property type="taxonomic scope" value="Eukaryota"/>
</dbReference>
<dbReference type="GeneTree" id="ENSGT00940000176815"/>
<dbReference type="HOGENOM" id="CLU_004588_3_0_1"/>
<dbReference type="InParanoid" id="Q12166"/>
<dbReference type="OMA" id="WPDKVID"/>
<dbReference type="OrthoDB" id="418791at2759"/>
<dbReference type="BioCyc" id="YEAST:MONOMER3O-59"/>
<dbReference type="UniPathway" id="UPA00048">
    <property type="reaction ID" value="UER00070"/>
</dbReference>
<dbReference type="BioGRID-ORCS" id="854275">
    <property type="hits" value="0 hits in 10 CRISPR screens"/>
</dbReference>
<dbReference type="PRO" id="PR:Q12166"/>
<dbReference type="Proteomes" id="UP000002311">
    <property type="component" value="Chromosome XV"/>
</dbReference>
<dbReference type="RNAct" id="Q12166">
    <property type="molecule type" value="protein"/>
</dbReference>
<dbReference type="GO" id="GO:0005739">
    <property type="term" value="C:mitochondrion"/>
    <property type="evidence" value="ECO:0000314"/>
    <property type="project" value="SGD"/>
</dbReference>
<dbReference type="GO" id="GO:0003852">
    <property type="term" value="F:2-isopropylmalate synthase activity"/>
    <property type="evidence" value="ECO:0000314"/>
    <property type="project" value="SGD"/>
</dbReference>
<dbReference type="GO" id="GO:0046872">
    <property type="term" value="F:metal ion binding"/>
    <property type="evidence" value="ECO:0007669"/>
    <property type="project" value="UniProtKB-KW"/>
</dbReference>
<dbReference type="GO" id="GO:0009098">
    <property type="term" value="P:L-leucine biosynthetic process"/>
    <property type="evidence" value="ECO:0000315"/>
    <property type="project" value="SGD"/>
</dbReference>
<dbReference type="CDD" id="cd07942">
    <property type="entry name" value="DRE_TIM_LeuA"/>
    <property type="match status" value="1"/>
</dbReference>
<dbReference type="FunFam" id="3.20.20.70:FF:000045">
    <property type="entry name" value="2-isopropylmalate synthase"/>
    <property type="match status" value="1"/>
</dbReference>
<dbReference type="FunFam" id="3.30.160.270:FF:000002">
    <property type="entry name" value="2-isopropylmalate synthase"/>
    <property type="match status" value="1"/>
</dbReference>
<dbReference type="Gene3D" id="3.30.160.270">
    <property type="match status" value="1"/>
</dbReference>
<dbReference type="Gene3D" id="3.20.20.70">
    <property type="entry name" value="Aldolase class I"/>
    <property type="match status" value="1"/>
</dbReference>
<dbReference type="HAMAP" id="MF_00572">
    <property type="entry name" value="LeuA_type2"/>
    <property type="match status" value="1"/>
</dbReference>
<dbReference type="InterPro" id="IPR013709">
    <property type="entry name" value="2-isopropylmalate_synth_dimer"/>
</dbReference>
<dbReference type="InterPro" id="IPR002034">
    <property type="entry name" value="AIPM/Hcit_synth_CS"/>
</dbReference>
<dbReference type="InterPro" id="IPR013785">
    <property type="entry name" value="Aldolase_TIM"/>
</dbReference>
<dbReference type="InterPro" id="IPR005668">
    <property type="entry name" value="IPM_Synthase"/>
</dbReference>
<dbReference type="InterPro" id="IPR054692">
    <property type="entry name" value="LeuA-like_post-cat"/>
</dbReference>
<dbReference type="InterPro" id="IPR036230">
    <property type="entry name" value="LeuA_allosteric_dom_sf"/>
</dbReference>
<dbReference type="InterPro" id="IPR039371">
    <property type="entry name" value="LeuA_N_DRE-TIM"/>
</dbReference>
<dbReference type="InterPro" id="IPR000891">
    <property type="entry name" value="PYR_CT"/>
</dbReference>
<dbReference type="NCBIfam" id="TIGR00970">
    <property type="entry name" value="leuA_yeast"/>
    <property type="match status" value="1"/>
</dbReference>
<dbReference type="NCBIfam" id="NF002991">
    <property type="entry name" value="PRK03739.1"/>
    <property type="match status" value="1"/>
</dbReference>
<dbReference type="PANTHER" id="PTHR46911">
    <property type="match status" value="1"/>
</dbReference>
<dbReference type="PANTHER" id="PTHR46911:SF2">
    <property type="entry name" value="2-ISOPROPYLMALATE SYNTHASE-RELATED"/>
    <property type="match status" value="1"/>
</dbReference>
<dbReference type="Pfam" id="PF00682">
    <property type="entry name" value="HMGL-like"/>
    <property type="match status" value="1"/>
</dbReference>
<dbReference type="Pfam" id="PF22615">
    <property type="entry name" value="IPMS_D2"/>
    <property type="match status" value="1"/>
</dbReference>
<dbReference type="Pfam" id="PF08502">
    <property type="entry name" value="LeuA_dimer"/>
    <property type="match status" value="1"/>
</dbReference>
<dbReference type="SMART" id="SM00917">
    <property type="entry name" value="LeuA_dimer"/>
    <property type="match status" value="1"/>
</dbReference>
<dbReference type="SUPFAM" id="SSF110921">
    <property type="entry name" value="2-isopropylmalate synthase LeuA, allosteric (dimerisation) domain"/>
    <property type="match status" value="1"/>
</dbReference>
<dbReference type="SUPFAM" id="SSF51569">
    <property type="entry name" value="Aldolase"/>
    <property type="match status" value="1"/>
</dbReference>
<dbReference type="SUPFAM" id="SSF89000">
    <property type="entry name" value="post-HMGL domain-like"/>
    <property type="match status" value="1"/>
</dbReference>
<dbReference type="PROSITE" id="PS00815">
    <property type="entry name" value="AIPM_HOMOCIT_SYNTH_1"/>
    <property type="match status" value="1"/>
</dbReference>
<dbReference type="PROSITE" id="PS00816">
    <property type="entry name" value="AIPM_HOMOCIT_SYNTH_2"/>
    <property type="match status" value="1"/>
</dbReference>
<dbReference type="PROSITE" id="PS50991">
    <property type="entry name" value="PYR_CT"/>
    <property type="match status" value="1"/>
</dbReference>
<evidence type="ECO:0000250" key="1">
    <source>
        <dbReference type="UniProtKB" id="P9WQB3"/>
    </source>
</evidence>
<evidence type="ECO:0000250" key="2">
    <source>
        <dbReference type="UniProtKB" id="Q9JZG1"/>
    </source>
</evidence>
<evidence type="ECO:0000255" key="3"/>
<evidence type="ECO:0000255" key="4">
    <source>
        <dbReference type="PROSITE-ProRule" id="PRU01151"/>
    </source>
</evidence>
<evidence type="ECO:0000269" key="5">
    <source>
    </source>
</evidence>
<evidence type="ECO:0000269" key="6">
    <source>
    </source>
</evidence>
<evidence type="ECO:0000269" key="7">
    <source>
    </source>
</evidence>
<evidence type="ECO:0000269" key="8">
    <source>
    </source>
</evidence>
<evidence type="ECO:0000303" key="9">
    <source>
    </source>
</evidence>
<evidence type="ECO:0000305" key="10"/>